<protein>
    <recommendedName>
        <fullName evidence="1">Probable manganese-dependent inorganic pyrophosphatase</fullName>
        <ecNumber evidence="1">3.6.1.1</ecNumber>
    </recommendedName>
    <alternativeName>
        <fullName evidence="1">Pyrophosphate phospho-hydrolase</fullName>
        <shortName evidence="1">PPase</shortName>
    </alternativeName>
</protein>
<gene>
    <name evidence="1" type="primary">ppaC</name>
    <name type="ordered locus">SZO_03490</name>
</gene>
<keyword id="KW-0963">Cytoplasm</keyword>
<keyword id="KW-0378">Hydrolase</keyword>
<keyword id="KW-0464">Manganese</keyword>
<keyword id="KW-0479">Metal-binding</keyword>
<feature type="chain" id="PRO_1000204162" description="Probable manganese-dependent inorganic pyrophosphatase">
    <location>
        <begin position="1"/>
        <end position="311"/>
    </location>
</feature>
<feature type="binding site" evidence="1">
    <location>
        <position position="9"/>
    </location>
    <ligand>
        <name>Mn(2+)</name>
        <dbReference type="ChEBI" id="CHEBI:29035"/>
        <label>1</label>
    </ligand>
</feature>
<feature type="binding site" evidence="1">
    <location>
        <position position="13"/>
    </location>
    <ligand>
        <name>Mn(2+)</name>
        <dbReference type="ChEBI" id="CHEBI:29035"/>
        <label>1</label>
    </ligand>
</feature>
<feature type="binding site" evidence="1">
    <location>
        <position position="15"/>
    </location>
    <ligand>
        <name>Mn(2+)</name>
        <dbReference type="ChEBI" id="CHEBI:29035"/>
        <label>2</label>
    </ligand>
</feature>
<feature type="binding site" evidence="1">
    <location>
        <position position="77"/>
    </location>
    <ligand>
        <name>Mn(2+)</name>
        <dbReference type="ChEBI" id="CHEBI:29035"/>
        <label>1</label>
    </ligand>
</feature>
<feature type="binding site" evidence="1">
    <location>
        <position position="77"/>
    </location>
    <ligand>
        <name>Mn(2+)</name>
        <dbReference type="ChEBI" id="CHEBI:29035"/>
        <label>2</label>
    </ligand>
</feature>
<feature type="binding site" evidence="1">
    <location>
        <position position="99"/>
    </location>
    <ligand>
        <name>Mn(2+)</name>
        <dbReference type="ChEBI" id="CHEBI:29035"/>
        <label>2</label>
    </ligand>
</feature>
<feature type="binding site" evidence="1">
    <location>
        <position position="151"/>
    </location>
    <ligand>
        <name>Mn(2+)</name>
        <dbReference type="ChEBI" id="CHEBI:29035"/>
        <label>2</label>
    </ligand>
</feature>
<evidence type="ECO:0000255" key="1">
    <source>
        <dbReference type="HAMAP-Rule" id="MF_00207"/>
    </source>
</evidence>
<accession>C0MGI9</accession>
<organism>
    <name type="scientific">Streptococcus equi subsp. zooepidemicus (strain H70)</name>
    <dbReference type="NCBI Taxonomy" id="553483"/>
    <lineage>
        <taxon>Bacteria</taxon>
        <taxon>Bacillati</taxon>
        <taxon>Bacillota</taxon>
        <taxon>Bacilli</taxon>
        <taxon>Lactobacillales</taxon>
        <taxon>Streptococcaceae</taxon>
        <taxon>Streptococcus</taxon>
    </lineage>
</organism>
<dbReference type="EC" id="3.6.1.1" evidence="1"/>
<dbReference type="EMBL" id="FM204884">
    <property type="protein sequence ID" value="CAW98187.1"/>
    <property type="molecule type" value="Genomic_DNA"/>
</dbReference>
<dbReference type="SMR" id="C0MGI9"/>
<dbReference type="KEGG" id="seq:SZO_03490"/>
<dbReference type="eggNOG" id="COG1227">
    <property type="taxonomic scope" value="Bacteria"/>
</dbReference>
<dbReference type="HOGENOM" id="CLU_025243_0_1_9"/>
<dbReference type="Proteomes" id="UP000001368">
    <property type="component" value="Chromosome"/>
</dbReference>
<dbReference type="GO" id="GO:0005737">
    <property type="term" value="C:cytoplasm"/>
    <property type="evidence" value="ECO:0007669"/>
    <property type="project" value="UniProtKB-SubCell"/>
</dbReference>
<dbReference type="GO" id="GO:0004427">
    <property type="term" value="F:inorganic diphosphate phosphatase activity"/>
    <property type="evidence" value="ECO:0007669"/>
    <property type="project" value="UniProtKB-UniRule"/>
</dbReference>
<dbReference type="GO" id="GO:0030145">
    <property type="term" value="F:manganese ion binding"/>
    <property type="evidence" value="ECO:0007669"/>
    <property type="project" value="UniProtKB-UniRule"/>
</dbReference>
<dbReference type="FunFam" id="3.10.310.20:FF:000001">
    <property type="entry name" value="Probable manganese-dependent inorganic pyrophosphatase"/>
    <property type="match status" value="1"/>
</dbReference>
<dbReference type="FunFam" id="3.90.1640.10:FF:000001">
    <property type="entry name" value="Probable manganese-dependent inorganic pyrophosphatase"/>
    <property type="match status" value="1"/>
</dbReference>
<dbReference type="Gene3D" id="3.10.310.20">
    <property type="entry name" value="DHHA2 domain"/>
    <property type="match status" value="1"/>
</dbReference>
<dbReference type="Gene3D" id="3.90.1640.10">
    <property type="entry name" value="inorganic pyrophosphatase (n-terminal core)"/>
    <property type="match status" value="1"/>
</dbReference>
<dbReference type="HAMAP" id="MF_00207">
    <property type="entry name" value="PPase_C"/>
    <property type="match status" value="1"/>
</dbReference>
<dbReference type="InterPro" id="IPR001667">
    <property type="entry name" value="DDH_dom"/>
</dbReference>
<dbReference type="InterPro" id="IPR038763">
    <property type="entry name" value="DHH_sf"/>
</dbReference>
<dbReference type="InterPro" id="IPR004097">
    <property type="entry name" value="DHHA2"/>
</dbReference>
<dbReference type="InterPro" id="IPR038222">
    <property type="entry name" value="DHHA2_dom_sf"/>
</dbReference>
<dbReference type="InterPro" id="IPR022934">
    <property type="entry name" value="Mn-dep_inorganic_PyrPase"/>
</dbReference>
<dbReference type="InterPro" id="IPR051319">
    <property type="entry name" value="Oligoribo/pAp-PDE_c-di-AMP_PDE"/>
</dbReference>
<dbReference type="NCBIfam" id="NF003877">
    <property type="entry name" value="PRK05427.1"/>
    <property type="match status" value="1"/>
</dbReference>
<dbReference type="PANTHER" id="PTHR47618">
    <property type="entry name" value="BIFUNCTIONAL OLIGORIBONUCLEASE AND PAP PHOSPHATASE NRNA"/>
    <property type="match status" value="1"/>
</dbReference>
<dbReference type="PANTHER" id="PTHR47618:SF1">
    <property type="entry name" value="BIFUNCTIONAL OLIGORIBONUCLEASE AND PAP PHOSPHATASE NRNA"/>
    <property type="match status" value="1"/>
</dbReference>
<dbReference type="Pfam" id="PF01368">
    <property type="entry name" value="DHH"/>
    <property type="match status" value="1"/>
</dbReference>
<dbReference type="Pfam" id="PF02833">
    <property type="entry name" value="DHHA2"/>
    <property type="match status" value="1"/>
</dbReference>
<dbReference type="SMART" id="SM01131">
    <property type="entry name" value="DHHA2"/>
    <property type="match status" value="1"/>
</dbReference>
<dbReference type="SUPFAM" id="SSF64182">
    <property type="entry name" value="DHH phosphoesterases"/>
    <property type="match status" value="1"/>
</dbReference>
<reference key="1">
    <citation type="journal article" date="2009" name="PLoS Pathog.">
        <title>Genomic evidence for the evolution of Streptococcus equi: host restriction, increased virulence, and genetic exchange with human pathogens.</title>
        <authorList>
            <person name="Holden M.T.G."/>
            <person name="Heather Z."/>
            <person name="Paillot R."/>
            <person name="Steward K.F."/>
            <person name="Webb K."/>
            <person name="Ainslie F."/>
            <person name="Jourdan T."/>
            <person name="Bason N.C."/>
            <person name="Holroyd N.E."/>
            <person name="Mungall K."/>
            <person name="Quail M.A."/>
            <person name="Sanders M."/>
            <person name="Simmonds M."/>
            <person name="Willey D."/>
            <person name="Brooks K."/>
            <person name="Aanensen D.M."/>
            <person name="Spratt B.G."/>
            <person name="Jolley K.A."/>
            <person name="Maiden M.C.J."/>
            <person name="Kehoe M."/>
            <person name="Chanter N."/>
            <person name="Bentley S.D."/>
            <person name="Robinson C."/>
            <person name="Maskell D.J."/>
            <person name="Parkhill J."/>
            <person name="Waller A.S."/>
        </authorList>
    </citation>
    <scope>NUCLEOTIDE SEQUENCE [LARGE SCALE GENOMIC DNA]</scope>
    <source>
        <strain>H70</strain>
    </source>
</reference>
<name>PPAC_STRS7</name>
<sequence length="311" mass="33695">MSKILVFGHQNPDTDAIASSYAFDYLAKKAFDLDTEVVALGDPNEETAFALDYFGVSAPRVVTSAKAEGASHVILTDHNEFPQSISDIREVEVYGIVDHHRVANFETANPLYMRVEPVGSASSIVYRLFKENRVDVPKDIAGLLLSGLISDTLLLKSPTTHASDHRVAVELAELAGVKLEEYGMAMLKAGTNLASKSEAELIDIDAKTFELNGNAVRVAQVNTVDIAEVLERKEAIEAAIKEVMASEGYSDFVLMITDIVNSNSEILALGANMDKVEAAFSFKLEDNHAFLAGAVSRKKQVVPQLTESFGA</sequence>
<proteinExistence type="inferred from homology"/>
<comment type="catalytic activity">
    <reaction evidence="1">
        <text>diphosphate + H2O = 2 phosphate + H(+)</text>
        <dbReference type="Rhea" id="RHEA:24576"/>
        <dbReference type="ChEBI" id="CHEBI:15377"/>
        <dbReference type="ChEBI" id="CHEBI:15378"/>
        <dbReference type="ChEBI" id="CHEBI:33019"/>
        <dbReference type="ChEBI" id="CHEBI:43474"/>
        <dbReference type="EC" id="3.6.1.1"/>
    </reaction>
</comment>
<comment type="cofactor">
    <cofactor evidence="1">
        <name>Mn(2+)</name>
        <dbReference type="ChEBI" id="CHEBI:29035"/>
    </cofactor>
    <text evidence="1">Binds 2 manganese ions per subunit.</text>
</comment>
<comment type="subcellular location">
    <subcellularLocation>
        <location evidence="1">Cytoplasm</location>
    </subcellularLocation>
</comment>
<comment type="similarity">
    <text evidence="1">Belongs to the PPase class C family.</text>
</comment>